<feature type="chain" id="PRO_1000129366" description="Ribonuclease PH">
    <location>
        <begin position="1"/>
        <end position="238"/>
    </location>
</feature>
<feature type="binding site" evidence="1">
    <location>
        <position position="86"/>
    </location>
    <ligand>
        <name>phosphate</name>
        <dbReference type="ChEBI" id="CHEBI:43474"/>
        <note>substrate</note>
    </ligand>
</feature>
<feature type="binding site" evidence="1">
    <location>
        <begin position="124"/>
        <end position="126"/>
    </location>
    <ligand>
        <name>phosphate</name>
        <dbReference type="ChEBI" id="CHEBI:43474"/>
        <note>substrate</note>
    </ligand>
</feature>
<comment type="function">
    <text evidence="1">Phosphorolytic 3'-5' exoribonuclease that plays an important role in tRNA 3'-end maturation. Removes nucleotide residues following the 3'-CCA terminus of tRNAs; can also add nucleotides to the ends of RNA molecules by using nucleoside diphosphates as substrates, but this may not be physiologically important. Probably plays a role in initiation of 16S rRNA degradation (leading to ribosome degradation) during starvation.</text>
</comment>
<comment type="catalytic activity">
    <reaction evidence="1">
        <text>tRNA(n+1) + phosphate = tRNA(n) + a ribonucleoside 5'-diphosphate</text>
        <dbReference type="Rhea" id="RHEA:10628"/>
        <dbReference type="Rhea" id="RHEA-COMP:17343"/>
        <dbReference type="Rhea" id="RHEA-COMP:17344"/>
        <dbReference type="ChEBI" id="CHEBI:43474"/>
        <dbReference type="ChEBI" id="CHEBI:57930"/>
        <dbReference type="ChEBI" id="CHEBI:173114"/>
        <dbReference type="EC" id="2.7.7.56"/>
    </reaction>
</comment>
<comment type="subunit">
    <text evidence="1">Homohexameric ring arranged as a trimer of dimers.</text>
</comment>
<comment type="similarity">
    <text evidence="1">Belongs to the RNase PH family.</text>
</comment>
<gene>
    <name evidence="1" type="primary">rph</name>
    <name type="ordered locus">SeD_A4121</name>
</gene>
<proteinExistence type="inferred from homology"/>
<name>RNPH_SALDC</name>
<reference key="1">
    <citation type="journal article" date="2011" name="J. Bacteriol.">
        <title>Comparative genomics of 28 Salmonella enterica isolates: evidence for CRISPR-mediated adaptive sublineage evolution.</title>
        <authorList>
            <person name="Fricke W.F."/>
            <person name="Mammel M.K."/>
            <person name="McDermott P.F."/>
            <person name="Tartera C."/>
            <person name="White D.G."/>
            <person name="Leclerc J.E."/>
            <person name="Ravel J."/>
            <person name="Cebula T.A."/>
        </authorList>
    </citation>
    <scope>NUCLEOTIDE SEQUENCE [LARGE SCALE GENOMIC DNA]</scope>
    <source>
        <strain>CT_02021853</strain>
    </source>
</reference>
<keyword id="KW-0548">Nucleotidyltransferase</keyword>
<keyword id="KW-0694">RNA-binding</keyword>
<keyword id="KW-0698">rRNA processing</keyword>
<keyword id="KW-0808">Transferase</keyword>
<keyword id="KW-0819">tRNA processing</keyword>
<keyword id="KW-0820">tRNA-binding</keyword>
<accession>B5FM66</accession>
<dbReference type="EC" id="2.7.7.56" evidence="1"/>
<dbReference type="EMBL" id="CP001144">
    <property type="protein sequence ID" value="ACH74118.1"/>
    <property type="molecule type" value="Genomic_DNA"/>
</dbReference>
<dbReference type="RefSeq" id="WP_001247078.1">
    <property type="nucleotide sequence ID" value="NC_011205.1"/>
</dbReference>
<dbReference type="SMR" id="B5FM66"/>
<dbReference type="KEGG" id="sed:SeD_A4121"/>
<dbReference type="HOGENOM" id="CLU_050858_0_0_6"/>
<dbReference type="Proteomes" id="UP000008322">
    <property type="component" value="Chromosome"/>
</dbReference>
<dbReference type="GO" id="GO:0000175">
    <property type="term" value="F:3'-5'-RNA exonuclease activity"/>
    <property type="evidence" value="ECO:0007669"/>
    <property type="project" value="UniProtKB-UniRule"/>
</dbReference>
<dbReference type="GO" id="GO:0000049">
    <property type="term" value="F:tRNA binding"/>
    <property type="evidence" value="ECO:0007669"/>
    <property type="project" value="UniProtKB-UniRule"/>
</dbReference>
<dbReference type="GO" id="GO:0009022">
    <property type="term" value="F:tRNA nucleotidyltransferase activity"/>
    <property type="evidence" value="ECO:0007669"/>
    <property type="project" value="UniProtKB-UniRule"/>
</dbReference>
<dbReference type="GO" id="GO:0016075">
    <property type="term" value="P:rRNA catabolic process"/>
    <property type="evidence" value="ECO:0007669"/>
    <property type="project" value="UniProtKB-UniRule"/>
</dbReference>
<dbReference type="GO" id="GO:0006364">
    <property type="term" value="P:rRNA processing"/>
    <property type="evidence" value="ECO:0007669"/>
    <property type="project" value="UniProtKB-KW"/>
</dbReference>
<dbReference type="GO" id="GO:0008033">
    <property type="term" value="P:tRNA processing"/>
    <property type="evidence" value="ECO:0007669"/>
    <property type="project" value="UniProtKB-UniRule"/>
</dbReference>
<dbReference type="CDD" id="cd11362">
    <property type="entry name" value="RNase_PH_bact"/>
    <property type="match status" value="1"/>
</dbReference>
<dbReference type="FunFam" id="3.30.230.70:FF:000003">
    <property type="entry name" value="Ribonuclease PH"/>
    <property type="match status" value="1"/>
</dbReference>
<dbReference type="Gene3D" id="3.30.230.70">
    <property type="entry name" value="GHMP Kinase, N-terminal domain"/>
    <property type="match status" value="1"/>
</dbReference>
<dbReference type="HAMAP" id="MF_00564">
    <property type="entry name" value="RNase_PH"/>
    <property type="match status" value="1"/>
</dbReference>
<dbReference type="InterPro" id="IPR001247">
    <property type="entry name" value="ExoRNase_PH_dom1"/>
</dbReference>
<dbReference type="InterPro" id="IPR015847">
    <property type="entry name" value="ExoRNase_PH_dom2"/>
</dbReference>
<dbReference type="InterPro" id="IPR036345">
    <property type="entry name" value="ExoRNase_PH_dom2_sf"/>
</dbReference>
<dbReference type="InterPro" id="IPR027408">
    <property type="entry name" value="PNPase/RNase_PH_dom_sf"/>
</dbReference>
<dbReference type="InterPro" id="IPR020568">
    <property type="entry name" value="Ribosomal_Su5_D2-typ_SF"/>
</dbReference>
<dbReference type="InterPro" id="IPR050080">
    <property type="entry name" value="RNase_PH"/>
</dbReference>
<dbReference type="InterPro" id="IPR002381">
    <property type="entry name" value="RNase_PH_bac-type"/>
</dbReference>
<dbReference type="InterPro" id="IPR018336">
    <property type="entry name" value="RNase_PH_CS"/>
</dbReference>
<dbReference type="NCBIfam" id="TIGR01966">
    <property type="entry name" value="RNasePH"/>
    <property type="match status" value="1"/>
</dbReference>
<dbReference type="PANTHER" id="PTHR11953">
    <property type="entry name" value="EXOSOME COMPLEX COMPONENT"/>
    <property type="match status" value="1"/>
</dbReference>
<dbReference type="PANTHER" id="PTHR11953:SF0">
    <property type="entry name" value="EXOSOME COMPLEX COMPONENT RRP41"/>
    <property type="match status" value="1"/>
</dbReference>
<dbReference type="Pfam" id="PF01138">
    <property type="entry name" value="RNase_PH"/>
    <property type="match status" value="1"/>
</dbReference>
<dbReference type="Pfam" id="PF03725">
    <property type="entry name" value="RNase_PH_C"/>
    <property type="match status" value="1"/>
</dbReference>
<dbReference type="SUPFAM" id="SSF55666">
    <property type="entry name" value="Ribonuclease PH domain 2-like"/>
    <property type="match status" value="1"/>
</dbReference>
<dbReference type="SUPFAM" id="SSF54211">
    <property type="entry name" value="Ribosomal protein S5 domain 2-like"/>
    <property type="match status" value="1"/>
</dbReference>
<dbReference type="PROSITE" id="PS01277">
    <property type="entry name" value="RIBONUCLEASE_PH"/>
    <property type="match status" value="1"/>
</dbReference>
<organism>
    <name type="scientific">Salmonella dublin (strain CT_02021853)</name>
    <dbReference type="NCBI Taxonomy" id="439851"/>
    <lineage>
        <taxon>Bacteria</taxon>
        <taxon>Pseudomonadati</taxon>
        <taxon>Pseudomonadota</taxon>
        <taxon>Gammaproteobacteria</taxon>
        <taxon>Enterobacterales</taxon>
        <taxon>Enterobacteriaceae</taxon>
        <taxon>Salmonella</taxon>
    </lineage>
</organism>
<sequence>MRPAGRSANQVRPVTLTRNYTKHAEGSVLVEFGDTKVLCTASIEEGVPRFLKGQGQGWITAEYGMLPRATHTRNAREAAKGKQGGRTMEIQRLIARALRAAVDLKTLGEFTITLDCDVIQADGGTRTASITGACVALADALNKLVANGKLKTNPMKGMVAAVSVGIVNGEAICDLEYVEDSAAETDMNVVMTEDGRIIEVQGTAEGEPFSHEELLTLLALARGGIESIVATQKAALEN</sequence>
<protein>
    <recommendedName>
        <fullName evidence="1">Ribonuclease PH</fullName>
        <shortName evidence="1">RNase PH</shortName>
        <ecNumber evidence="1">2.7.7.56</ecNumber>
    </recommendedName>
    <alternativeName>
        <fullName evidence="1">tRNA nucleotidyltransferase</fullName>
    </alternativeName>
</protein>
<evidence type="ECO:0000255" key="1">
    <source>
        <dbReference type="HAMAP-Rule" id="MF_00564"/>
    </source>
</evidence>